<dbReference type="EC" id="2.3.1.168" evidence="1"/>
<dbReference type="EMBL" id="Z37093">
    <property type="protein sequence ID" value="CAA85465.1"/>
    <property type="molecule type" value="Genomic_DNA"/>
</dbReference>
<dbReference type="PIR" id="T27955">
    <property type="entry name" value="T27955"/>
</dbReference>
<dbReference type="RefSeq" id="NP_495670.1">
    <property type="nucleotide sequence ID" value="NM_063269.7"/>
</dbReference>
<dbReference type="SMR" id="Q23571"/>
<dbReference type="BioGRID" id="39612">
    <property type="interactions" value="8"/>
</dbReference>
<dbReference type="DIP" id="DIP-26430N"/>
<dbReference type="FunCoup" id="Q23571">
    <property type="interactions" value="2368"/>
</dbReference>
<dbReference type="IntAct" id="Q23571">
    <property type="interactions" value="2"/>
</dbReference>
<dbReference type="STRING" id="6239.ZK669.4.1"/>
<dbReference type="PaxDb" id="6239-ZK669.4"/>
<dbReference type="PeptideAtlas" id="Q23571"/>
<dbReference type="EnsemblMetazoa" id="ZK669.4.1">
    <property type="protein sequence ID" value="ZK669.4.1"/>
    <property type="gene ID" value="WBGene00014054"/>
</dbReference>
<dbReference type="GeneID" id="174279"/>
<dbReference type="KEGG" id="cel:CELE_ZK669.4"/>
<dbReference type="UCSC" id="ZK669.4.1">
    <property type="organism name" value="c. elegans"/>
</dbReference>
<dbReference type="AGR" id="WB:WBGene00014054"/>
<dbReference type="CTD" id="174279"/>
<dbReference type="WormBase" id="ZK669.4">
    <property type="protein sequence ID" value="CE01115"/>
    <property type="gene ID" value="WBGene00014054"/>
    <property type="gene designation" value="dbt-1"/>
</dbReference>
<dbReference type="eggNOG" id="KOG0558">
    <property type="taxonomic scope" value="Eukaryota"/>
</dbReference>
<dbReference type="GeneTree" id="ENSGT00940000156750"/>
<dbReference type="HOGENOM" id="CLU_016733_10_0_1"/>
<dbReference type="InParanoid" id="Q23571"/>
<dbReference type="OMA" id="MPFCIKA"/>
<dbReference type="OrthoDB" id="202158at2759"/>
<dbReference type="PhylomeDB" id="Q23571"/>
<dbReference type="Reactome" id="R-CEL-9013407">
    <property type="pathway name" value="RHOH GTPase cycle"/>
</dbReference>
<dbReference type="Reactome" id="R-CEL-9837999">
    <property type="pathway name" value="Mitochondrial protein degradation"/>
</dbReference>
<dbReference type="Reactome" id="R-CEL-9857492">
    <property type="pathway name" value="Protein lipoylation"/>
</dbReference>
<dbReference type="Reactome" id="R-CEL-9859138">
    <property type="pathway name" value="BCKDH synthesizes BCAA-CoA from KIC, KMVA, KIV"/>
</dbReference>
<dbReference type="PRO" id="PR:Q23571"/>
<dbReference type="Proteomes" id="UP000001940">
    <property type="component" value="Chromosome II"/>
</dbReference>
<dbReference type="Bgee" id="WBGene00014054">
    <property type="expression patterns" value="Expressed in adult organism and 4 other cell types or tissues"/>
</dbReference>
<dbReference type="GO" id="GO:0005929">
    <property type="term" value="C:cilium"/>
    <property type="evidence" value="ECO:0000314"/>
    <property type="project" value="UniProtKB"/>
</dbReference>
<dbReference type="GO" id="GO:0005737">
    <property type="term" value="C:cytoplasm"/>
    <property type="evidence" value="ECO:0000318"/>
    <property type="project" value="GO_Central"/>
</dbReference>
<dbReference type="GO" id="GO:0005829">
    <property type="term" value="C:cytosol"/>
    <property type="evidence" value="ECO:0000314"/>
    <property type="project" value="UniProtKB"/>
</dbReference>
<dbReference type="GO" id="GO:0030425">
    <property type="term" value="C:dendrite"/>
    <property type="evidence" value="ECO:0007669"/>
    <property type="project" value="UniProtKB-SubCell"/>
</dbReference>
<dbReference type="GO" id="GO:0005759">
    <property type="term" value="C:mitochondrial matrix"/>
    <property type="evidence" value="ECO:0007669"/>
    <property type="project" value="UniProtKB-SubCell"/>
</dbReference>
<dbReference type="GO" id="GO:0005739">
    <property type="term" value="C:mitochondrion"/>
    <property type="evidence" value="ECO:0000318"/>
    <property type="project" value="GO_Central"/>
</dbReference>
<dbReference type="GO" id="GO:0043005">
    <property type="term" value="C:neuron projection"/>
    <property type="evidence" value="ECO:0000314"/>
    <property type="project" value="UniProtKB"/>
</dbReference>
<dbReference type="GO" id="GO:0016407">
    <property type="term" value="F:acetyltransferase activity"/>
    <property type="evidence" value="ECO:0000318"/>
    <property type="project" value="GO_Central"/>
</dbReference>
<dbReference type="GO" id="GO:0043754">
    <property type="term" value="F:dihydrolipoyllysine-residue (2-methylpropanoyl)transferase activity"/>
    <property type="evidence" value="ECO:0007669"/>
    <property type="project" value="UniProtKB-EC"/>
</dbReference>
<dbReference type="GO" id="GO:0031405">
    <property type="term" value="F:lipoic acid binding"/>
    <property type="evidence" value="ECO:0000318"/>
    <property type="project" value="GO_Central"/>
</dbReference>
<dbReference type="GO" id="GO:0006633">
    <property type="term" value="P:fatty acid biosynthetic process"/>
    <property type="evidence" value="ECO:0007669"/>
    <property type="project" value="UniProtKB-KW"/>
</dbReference>
<dbReference type="GO" id="GO:1901046">
    <property type="term" value="P:positive regulation of egg-laying behavior"/>
    <property type="evidence" value="ECO:0000315"/>
    <property type="project" value="UniProtKB"/>
</dbReference>
<dbReference type="GO" id="GO:0040019">
    <property type="term" value="P:positive regulation of embryonic development"/>
    <property type="evidence" value="ECO:0000315"/>
    <property type="project" value="UniProtKB"/>
</dbReference>
<dbReference type="GO" id="GO:0045723">
    <property type="term" value="P:positive regulation of fatty acid biosynthetic process"/>
    <property type="evidence" value="ECO:0000315"/>
    <property type="project" value="UniProtKB"/>
</dbReference>
<dbReference type="GO" id="GO:0061063">
    <property type="term" value="P:positive regulation of nematode larval development"/>
    <property type="evidence" value="ECO:0000315"/>
    <property type="project" value="UniProtKB"/>
</dbReference>
<dbReference type="CDD" id="cd06849">
    <property type="entry name" value="lipoyl_domain"/>
    <property type="match status" value="1"/>
</dbReference>
<dbReference type="FunFam" id="2.40.50.100:FF:000013">
    <property type="entry name" value="Dihydrolipoamide acetyltransferase component of pyruvate dehydrogenase complex"/>
    <property type="match status" value="1"/>
</dbReference>
<dbReference type="FunFam" id="3.30.559.10:FF:000027">
    <property type="entry name" value="Dihydrolipoamide acetyltransferase component of pyruvate dehydrogenase complex"/>
    <property type="match status" value="1"/>
</dbReference>
<dbReference type="FunFam" id="4.10.320.10:FF:000002">
    <property type="entry name" value="Dihydrolipoamide acetyltransferase component of pyruvate dehydrogenase complex"/>
    <property type="match status" value="1"/>
</dbReference>
<dbReference type="Gene3D" id="2.40.50.100">
    <property type="match status" value="1"/>
</dbReference>
<dbReference type="Gene3D" id="3.30.559.10">
    <property type="entry name" value="Chloramphenicol acetyltransferase-like domain"/>
    <property type="match status" value="1"/>
</dbReference>
<dbReference type="Gene3D" id="4.10.320.10">
    <property type="entry name" value="E3-binding domain"/>
    <property type="match status" value="1"/>
</dbReference>
<dbReference type="InterPro" id="IPR003016">
    <property type="entry name" value="2-oxoA_DH_lipoyl-BS"/>
</dbReference>
<dbReference type="InterPro" id="IPR001078">
    <property type="entry name" value="2-oxoacid_DH_actylTfrase"/>
</dbReference>
<dbReference type="InterPro" id="IPR050743">
    <property type="entry name" value="2-oxoacid_DH_E2_comp"/>
</dbReference>
<dbReference type="InterPro" id="IPR000089">
    <property type="entry name" value="Biotin_lipoyl"/>
</dbReference>
<dbReference type="InterPro" id="IPR023213">
    <property type="entry name" value="CAT-like_dom_sf"/>
</dbReference>
<dbReference type="InterPro" id="IPR036625">
    <property type="entry name" value="E3-bd_dom_sf"/>
</dbReference>
<dbReference type="InterPro" id="IPR004167">
    <property type="entry name" value="PSBD"/>
</dbReference>
<dbReference type="InterPro" id="IPR011053">
    <property type="entry name" value="Single_hybrid_motif"/>
</dbReference>
<dbReference type="PANTHER" id="PTHR43178">
    <property type="entry name" value="DIHYDROLIPOAMIDE ACETYLTRANSFERASE COMPONENT OF PYRUVATE DEHYDROGENASE COMPLEX"/>
    <property type="match status" value="1"/>
</dbReference>
<dbReference type="PANTHER" id="PTHR43178:SF5">
    <property type="entry name" value="LIPOAMIDE ACYLTRANSFERASE COMPONENT OF BRANCHED-CHAIN ALPHA-KETO ACID DEHYDROGENASE COMPLEX, MITOCHONDRIAL"/>
    <property type="match status" value="1"/>
</dbReference>
<dbReference type="Pfam" id="PF00198">
    <property type="entry name" value="2-oxoacid_dh"/>
    <property type="match status" value="1"/>
</dbReference>
<dbReference type="Pfam" id="PF00364">
    <property type="entry name" value="Biotin_lipoyl"/>
    <property type="match status" value="1"/>
</dbReference>
<dbReference type="Pfam" id="PF02817">
    <property type="entry name" value="E3_binding"/>
    <property type="match status" value="1"/>
</dbReference>
<dbReference type="SUPFAM" id="SSF52777">
    <property type="entry name" value="CoA-dependent acyltransferases"/>
    <property type="match status" value="1"/>
</dbReference>
<dbReference type="SUPFAM" id="SSF47005">
    <property type="entry name" value="Peripheral subunit-binding domain of 2-oxo acid dehydrogenase complex"/>
    <property type="match status" value="1"/>
</dbReference>
<dbReference type="SUPFAM" id="SSF51230">
    <property type="entry name" value="Single hybrid motif"/>
    <property type="match status" value="1"/>
</dbReference>
<dbReference type="PROSITE" id="PS50968">
    <property type="entry name" value="BIOTINYL_LIPOYL"/>
    <property type="match status" value="1"/>
</dbReference>
<dbReference type="PROSITE" id="PS00189">
    <property type="entry name" value="LIPOYL"/>
    <property type="match status" value="1"/>
</dbReference>
<dbReference type="PROSITE" id="PS51826">
    <property type="entry name" value="PSBD"/>
    <property type="match status" value="1"/>
</dbReference>
<evidence type="ECO:0000250" key="1">
    <source>
        <dbReference type="UniProtKB" id="P11181"/>
    </source>
</evidence>
<evidence type="ECO:0000255" key="2"/>
<evidence type="ECO:0000255" key="3">
    <source>
        <dbReference type="PROSITE-ProRule" id="PRU01066"/>
    </source>
</evidence>
<evidence type="ECO:0000255" key="4">
    <source>
        <dbReference type="PROSITE-ProRule" id="PRU01170"/>
    </source>
</evidence>
<evidence type="ECO:0000256" key="5">
    <source>
        <dbReference type="SAM" id="MobiDB-lite"/>
    </source>
</evidence>
<evidence type="ECO:0000269" key="6">
    <source>
    </source>
</evidence>
<evidence type="ECO:0000303" key="7">
    <source>
    </source>
</evidence>
<evidence type="ECO:0000305" key="8"/>
<evidence type="ECO:0000312" key="9">
    <source>
        <dbReference type="WormBase" id="ZK669.4"/>
    </source>
</evidence>
<comment type="function">
    <text evidence="1 6">The branched-chain alpha-keto dehydrogenase complex catalyzes the overall conversion of alpha-keto acids to acyl-CoA and CO(2) (By similarity). It contains multiple copies of three enzymatic components: branched-chain alpha-keto acid decarboxylase (E1), lipoamide acyltransferase (E2) and lipoamide dehydrogenase (E3) (By similarity). Within this complex, the catalytic function of this enzyme is to accept, and to transfer to coenzyme A, acyl groups that are generated by the branched-chain alpha-keto acid decarboxylase component (By similarity). Required for the catabolism of branched-chain amino acids and the subsequent synthesis of monomethyl branched-chain fatty acids, which are important for regulating postembryonic growth (PubMed:26683372).</text>
</comment>
<comment type="catalytic activity">
    <reaction evidence="1">
        <text>N(6)-[(R)-dihydrolipoyl]-L-lysyl-[protein] + 2-methylpropanoyl-CoA = N(6)-[(R)-S(8)-2-methylpropanoyldihydrolipoyl]-L-lysyl-[protein] + CoA</text>
        <dbReference type="Rhea" id="RHEA:18865"/>
        <dbReference type="Rhea" id="RHEA-COMP:10475"/>
        <dbReference type="Rhea" id="RHEA-COMP:10497"/>
        <dbReference type="ChEBI" id="CHEBI:57287"/>
        <dbReference type="ChEBI" id="CHEBI:57338"/>
        <dbReference type="ChEBI" id="CHEBI:83100"/>
        <dbReference type="ChEBI" id="CHEBI:83142"/>
        <dbReference type="EC" id="2.3.1.168"/>
    </reaction>
    <physiologicalReaction direction="left-to-right" evidence="1">
        <dbReference type="Rhea" id="RHEA:18866"/>
    </physiologicalReaction>
</comment>
<comment type="cofactor">
    <cofactor evidence="1">
        <name>(R)-lipoate</name>
        <dbReference type="ChEBI" id="CHEBI:83088"/>
    </cofactor>
    <text evidence="1">Binds 1 lipoyl cofactor covalently.</text>
</comment>
<comment type="subcellular location">
    <subcellularLocation>
        <location evidence="1">Mitochondrion matrix</location>
    </subcellularLocation>
    <subcellularLocation>
        <location evidence="6">Cytoplasm</location>
        <location evidence="6">Cytosol</location>
    </subcellularLocation>
    <subcellularLocation>
        <location evidence="6">Cell projection</location>
        <location evidence="6">Dendrite</location>
    </subcellularLocation>
    <subcellularLocation>
        <location evidence="6">Cell projection</location>
        <location evidence="6">Cilium</location>
    </subcellularLocation>
    <text evidence="6">Localizes to puncta within the cytosol which is consistent with its expected location in mitochondria.</text>
</comment>
<comment type="tissue specificity">
    <text evidence="6">Ubiquitously expressed.</text>
</comment>
<comment type="disruption phenotype">
    <text evidence="6">RNAi-mediated knockdown results in reduced monomethyl branched-chain fatty acid generation and also results in larval arrest in the subsequent generation.</text>
</comment>
<comment type="similarity">
    <text evidence="8">Belongs to the 2-oxoacid dehydrogenase family.</text>
</comment>
<reference key="1">
    <citation type="journal article" date="1998" name="Science">
        <title>Genome sequence of the nematode C. elegans: a platform for investigating biology.</title>
        <authorList>
            <consortium name="The C. elegans sequencing consortium"/>
        </authorList>
    </citation>
    <scope>NUCLEOTIDE SEQUENCE [LARGE SCALE GENOMIC DNA]</scope>
    <source>
        <strain>Bristol N2</strain>
    </source>
</reference>
<reference key="2">
    <citation type="journal article" date="2016" name="J. Biol. Chem.">
        <title>Developmental defects of Caenorhabditis elegans lacking branched-chain alpha-ketoacid dehydrogenase are mainly caused by monomethyl branched-chain fatty acid deficiency.</title>
        <authorList>
            <person name="Jia F."/>
            <person name="Cui M."/>
            <person name="Than M.T."/>
            <person name="Han M."/>
        </authorList>
    </citation>
    <scope>FUNCTION</scope>
    <scope>SUBCELLULAR LOCATION</scope>
    <scope>TISSUE SPECIFICITY</scope>
    <scope>DISRUPTION PHENOTYPE</scope>
</reference>
<proteinExistence type="evidence at transcript level"/>
<organism>
    <name type="scientific">Caenorhabditis elegans</name>
    <dbReference type="NCBI Taxonomy" id="6239"/>
    <lineage>
        <taxon>Eukaryota</taxon>
        <taxon>Metazoa</taxon>
        <taxon>Ecdysozoa</taxon>
        <taxon>Nematoda</taxon>
        <taxon>Chromadorea</taxon>
        <taxon>Rhabditida</taxon>
        <taxon>Rhabditina</taxon>
        <taxon>Rhabditomorpha</taxon>
        <taxon>Rhabditoidea</taxon>
        <taxon>Rhabditidae</taxon>
        <taxon>Peloderinae</taxon>
        <taxon>Caenorhabditis</taxon>
    </lineage>
</organism>
<sequence length="448" mass="49691">MMAARLLGTSSRIFKLNKHLHTSKVAFMPVVQFKLSDIGEGIAEVQVKEWYVKEGDTISQFDKVCEVQSDKAAVTISCRYDGIVKKLYHEVDGMARVGQALIDVEIEGNVEEPEQPKKEAASSSPEAPKSSAPKAPESAHSEGKVLATPAVRRIAIENKIKLAEVRGTGKDGRVLKEDVLKFLGQVPADHTSGSTNIRTTHQAPQPSSKSYEPLKEDVAVPIRGYTRAMVKTMTEALKIPHFGYNDEINVDSLVKYRAELKEFAKERHIKLSYMPFFIKAASLALLEYPSLNSTTDEKMENVIHKASHNICLAMDTPGGLVVPNIKNCEQRSIFEIAQELNRLLEAGKKQQIKREDLIDGTFSLSNIGNIGGTYASPVVFPPQVAIGAIGKIEKLPRFDKHDNVIPVNIMKVSWCADHRVVDGATMARFSNRWKFYLEHPSAMLAQLK</sequence>
<gene>
    <name evidence="7 9" type="primary">dbt-1</name>
    <name evidence="9" type="ORF">ZK669.4</name>
</gene>
<feature type="transit peptide" description="Mitochondrion" evidence="2">
    <location>
        <begin position="1"/>
        <end status="unknown"/>
    </location>
</feature>
<feature type="chain" id="PRO_0000421275" description="Lipoamide acyltransferase component of branched-chain alpha-keto acid dehydrogenase complex, mitochondrial">
    <location>
        <begin status="unknown"/>
        <end position="448"/>
    </location>
</feature>
<feature type="domain" description="Lipoyl-binding" evidence="3">
    <location>
        <begin position="30"/>
        <end position="105"/>
    </location>
</feature>
<feature type="domain" description="Peripheral subunit-binding (PSBD)" evidence="4">
    <location>
        <begin position="146"/>
        <end position="183"/>
    </location>
</feature>
<feature type="region of interest" description="Disordered" evidence="5">
    <location>
        <begin position="108"/>
        <end position="146"/>
    </location>
</feature>
<feature type="region of interest" description="Disordered" evidence="5">
    <location>
        <begin position="191"/>
        <end position="211"/>
    </location>
</feature>
<feature type="compositionally biased region" description="Low complexity" evidence="5">
    <location>
        <begin position="121"/>
        <end position="136"/>
    </location>
</feature>
<feature type="compositionally biased region" description="Polar residues" evidence="5">
    <location>
        <begin position="191"/>
        <end position="210"/>
    </location>
</feature>
<feature type="active site" evidence="2">
    <location>
        <position position="418"/>
    </location>
</feature>
<feature type="active site" evidence="2">
    <location>
        <position position="422"/>
    </location>
</feature>
<feature type="binding site" evidence="1">
    <location>
        <position position="257"/>
    </location>
    <ligand>
        <name>CoA</name>
        <dbReference type="ChEBI" id="CHEBI:57287"/>
    </ligand>
</feature>
<feature type="binding site" evidence="1">
    <location>
        <position position="272"/>
    </location>
    <ligand>
        <name>CoA</name>
        <dbReference type="ChEBI" id="CHEBI:57287"/>
    </ligand>
</feature>
<feature type="binding site" evidence="1">
    <location>
        <position position="315"/>
    </location>
    <ligand>
        <name>CoA</name>
        <dbReference type="ChEBI" id="CHEBI:57287"/>
    </ligand>
</feature>
<feature type="binding site" evidence="1">
    <location>
        <position position="365"/>
    </location>
    <ligand>
        <name>CoA</name>
        <dbReference type="ChEBI" id="CHEBI:57287"/>
    </ligand>
</feature>
<feature type="binding site" evidence="1">
    <location>
        <position position="366"/>
    </location>
    <ligand>
        <name>CoA</name>
        <dbReference type="ChEBI" id="CHEBI:57287"/>
    </ligand>
</feature>
<feature type="binding site" evidence="1">
    <location>
        <position position="390"/>
    </location>
    <ligand>
        <name>CoA</name>
        <dbReference type="ChEBI" id="CHEBI:57287"/>
    </ligand>
</feature>
<feature type="binding site" evidence="1">
    <location>
        <position position="392"/>
    </location>
    <ligand>
        <name>CoA</name>
        <dbReference type="ChEBI" id="CHEBI:57287"/>
    </ligand>
</feature>
<feature type="modified residue" description="N6-lipoyllysine" evidence="1 3">
    <location>
        <position position="71"/>
    </location>
</feature>
<name>ODB2_CAEEL</name>
<keyword id="KW-0012">Acyltransferase</keyword>
<keyword id="KW-0966">Cell projection</keyword>
<keyword id="KW-0963">Cytoplasm</keyword>
<keyword id="KW-0275">Fatty acid biosynthesis</keyword>
<keyword id="KW-0276">Fatty acid metabolism</keyword>
<keyword id="KW-0444">Lipid biosynthesis</keyword>
<keyword id="KW-0443">Lipid metabolism</keyword>
<keyword id="KW-0450">Lipoyl</keyword>
<keyword id="KW-0496">Mitochondrion</keyword>
<keyword id="KW-1185">Reference proteome</keyword>
<keyword id="KW-0808">Transferase</keyword>
<keyword id="KW-0809">Transit peptide</keyword>
<accession>Q23571</accession>
<protein>
    <recommendedName>
        <fullName evidence="8">Lipoamide acyltransferase component of branched-chain alpha-keto acid dehydrogenase complex, mitochondrial</fullName>
        <ecNumber evidence="1">2.3.1.168</ecNumber>
    </recommendedName>
    <alternativeName>
        <fullName>Branched-chain alpha-keto acid dehydrogenase complex component E2</fullName>
    </alternativeName>
    <alternativeName>
        <fullName evidence="9">Dihydrolipoamide branched-chain transacylase E2</fullName>
    </alternativeName>
</protein>